<sequence>MVVVTGQSKGSGDPDEAMSSSDAEDDFQEPATPTATQAGQALPLLPQQFPEVVPLNVGGMHFTTRLSTLRRYEDTMLAAMFSGRHYIPTDAEGRYFIDRDGTYFGDILNFLRSGDLPPRERVRPVYKEAQYYSIGPLLDHLEDVQPLKGEKVRQAFLGLMPYYKDHLERIIEIAKLRAVQRKARFAKLKVCVFKEEMPITPYECPHFNSLRFERSESEAKLFEHHCEVDVSFGPWEAVADVYDLLHCIVTDLSDRGITVDHQCIGVCDKHLINHYYCKRPIYEFKITWW</sequence>
<keyword id="KW-1003">Cell membrane</keyword>
<keyword id="KW-0963">Cytoplasm</keyword>
<keyword id="KW-0472">Membrane</keyword>
<keyword id="KW-1185">Reference proteome</keyword>
<evidence type="ECO:0000250" key="1"/>
<evidence type="ECO:0000256" key="2">
    <source>
        <dbReference type="SAM" id="MobiDB-lite"/>
    </source>
</evidence>
<accession>Q5ZJP7</accession>
<proteinExistence type="evidence at transcript level"/>
<comment type="function">
    <text evidence="1">May be involved in the control of excitability of cortical neurons.</text>
</comment>
<comment type="subcellular location">
    <subcellularLocation>
        <location evidence="1">Cell membrane</location>
    </subcellularLocation>
    <subcellularLocation>
        <location evidence="1">Cytoplasm</location>
        <location evidence="1">Cytosol</location>
    </subcellularLocation>
</comment>
<protein>
    <recommendedName>
        <fullName>BTB/POZ domain-containing protein KCTD7</fullName>
    </recommendedName>
</protein>
<dbReference type="EMBL" id="AJ720387">
    <property type="protein sequence ID" value="CAG32046.1"/>
    <property type="molecule type" value="mRNA"/>
</dbReference>
<dbReference type="RefSeq" id="NP_001034358.1">
    <property type="nucleotide sequence ID" value="NM_001039269.2"/>
</dbReference>
<dbReference type="RefSeq" id="XP_040506005.1">
    <property type="nucleotide sequence ID" value="XM_040650071.2"/>
</dbReference>
<dbReference type="RefSeq" id="XP_046786014.1">
    <property type="nucleotide sequence ID" value="XM_046930058.1"/>
</dbReference>
<dbReference type="SMR" id="Q5ZJP7"/>
<dbReference type="FunCoup" id="Q5ZJP7">
    <property type="interactions" value="228"/>
</dbReference>
<dbReference type="STRING" id="9031.ENSGALP00000004111"/>
<dbReference type="PaxDb" id="9031-ENSGALP00000004111"/>
<dbReference type="GeneID" id="417547"/>
<dbReference type="KEGG" id="gga:417547"/>
<dbReference type="CTD" id="154881"/>
<dbReference type="VEuPathDB" id="HostDB:geneid_417547"/>
<dbReference type="eggNOG" id="KOG2723">
    <property type="taxonomic scope" value="Eukaryota"/>
</dbReference>
<dbReference type="HOGENOM" id="CLU_070345_1_0_1"/>
<dbReference type="InParanoid" id="Q5ZJP7"/>
<dbReference type="OMA" id="IAAEQQC"/>
<dbReference type="OrthoDB" id="2414723at2759"/>
<dbReference type="PhylomeDB" id="Q5ZJP7"/>
<dbReference type="TreeFam" id="TF315332"/>
<dbReference type="Reactome" id="R-GGA-8951664">
    <property type="pathway name" value="Neddylation"/>
</dbReference>
<dbReference type="Reactome" id="R-GGA-983168">
    <property type="pathway name" value="Antigen processing: Ubiquitination &amp; Proteasome degradation"/>
</dbReference>
<dbReference type="PRO" id="PR:Q5ZJP7"/>
<dbReference type="Proteomes" id="UP000000539">
    <property type="component" value="Chromosome 19"/>
</dbReference>
<dbReference type="Bgee" id="ENSGALG00000002618">
    <property type="expression patterns" value="Expressed in spermatid and 13 other cell types or tissues"/>
</dbReference>
<dbReference type="GO" id="GO:0005829">
    <property type="term" value="C:cytosol"/>
    <property type="evidence" value="ECO:0007669"/>
    <property type="project" value="UniProtKB-SubCell"/>
</dbReference>
<dbReference type="GO" id="GO:0005886">
    <property type="term" value="C:plasma membrane"/>
    <property type="evidence" value="ECO:0000318"/>
    <property type="project" value="GO_Central"/>
</dbReference>
<dbReference type="GO" id="GO:0060081">
    <property type="term" value="P:membrane hyperpolarization"/>
    <property type="evidence" value="ECO:0000318"/>
    <property type="project" value="GO_Central"/>
</dbReference>
<dbReference type="GO" id="GO:0051260">
    <property type="term" value="P:protein homooligomerization"/>
    <property type="evidence" value="ECO:0007669"/>
    <property type="project" value="InterPro"/>
</dbReference>
<dbReference type="CDD" id="cd18366">
    <property type="entry name" value="BTB_POZ_KCTD7"/>
    <property type="match status" value="1"/>
</dbReference>
<dbReference type="FunFam" id="3.30.710.10:FF:000046">
    <property type="entry name" value="BTB/POZ domain-containing protein KCTD7 isoform X1"/>
    <property type="match status" value="1"/>
</dbReference>
<dbReference type="Gene3D" id="3.30.710.10">
    <property type="entry name" value="Potassium Channel Kv1.1, Chain A"/>
    <property type="match status" value="1"/>
</dbReference>
<dbReference type="InterPro" id="IPR000210">
    <property type="entry name" value="BTB/POZ_dom"/>
</dbReference>
<dbReference type="InterPro" id="IPR011333">
    <property type="entry name" value="SKP1/BTB/POZ_sf"/>
</dbReference>
<dbReference type="InterPro" id="IPR003131">
    <property type="entry name" value="T1-type_BTB"/>
</dbReference>
<dbReference type="PANTHER" id="PTHR14499:SF122">
    <property type="entry name" value="BTB_POZ DOMAIN-CONTAINING PROTEIN KCTD7"/>
    <property type="match status" value="1"/>
</dbReference>
<dbReference type="PANTHER" id="PTHR14499">
    <property type="entry name" value="POTASSIUM CHANNEL TETRAMERIZATION DOMAIN-CONTAINING"/>
    <property type="match status" value="1"/>
</dbReference>
<dbReference type="Pfam" id="PF02214">
    <property type="entry name" value="BTB_2"/>
    <property type="match status" value="1"/>
</dbReference>
<dbReference type="SMART" id="SM00225">
    <property type="entry name" value="BTB"/>
    <property type="match status" value="1"/>
</dbReference>
<dbReference type="SUPFAM" id="SSF54695">
    <property type="entry name" value="POZ domain"/>
    <property type="match status" value="1"/>
</dbReference>
<feature type="chain" id="PRO_0000251475" description="BTB/POZ domain-containing protein KCTD7">
    <location>
        <begin position="1"/>
        <end position="289"/>
    </location>
</feature>
<feature type="domain" description="BTB">
    <location>
        <begin position="51"/>
        <end position="149"/>
    </location>
</feature>
<feature type="region of interest" description="Disordered" evidence="2">
    <location>
        <begin position="1"/>
        <end position="35"/>
    </location>
</feature>
<feature type="compositionally biased region" description="Polar residues" evidence="2">
    <location>
        <begin position="1"/>
        <end position="10"/>
    </location>
</feature>
<gene>
    <name type="primary">KCTD7</name>
    <name type="ORF">RCJMB04_16j10</name>
</gene>
<reference key="1">
    <citation type="journal article" date="2005" name="Genome Biol.">
        <title>Full-length cDNAs from chicken bursal lymphocytes to facilitate gene function analysis.</title>
        <authorList>
            <person name="Caldwell R.B."/>
            <person name="Kierzek A.M."/>
            <person name="Arakawa H."/>
            <person name="Bezzubov Y."/>
            <person name="Zaim J."/>
            <person name="Fiedler P."/>
            <person name="Kutter S."/>
            <person name="Blagodatski A."/>
            <person name="Kostovska D."/>
            <person name="Koter M."/>
            <person name="Plachy J."/>
            <person name="Carninci P."/>
            <person name="Hayashizaki Y."/>
            <person name="Buerstedde J.-M."/>
        </authorList>
    </citation>
    <scope>NUCLEOTIDE SEQUENCE [LARGE SCALE MRNA]</scope>
    <source>
        <strain>CB</strain>
        <tissue>Bursa of Fabricius</tissue>
    </source>
</reference>
<organism>
    <name type="scientific">Gallus gallus</name>
    <name type="common">Chicken</name>
    <dbReference type="NCBI Taxonomy" id="9031"/>
    <lineage>
        <taxon>Eukaryota</taxon>
        <taxon>Metazoa</taxon>
        <taxon>Chordata</taxon>
        <taxon>Craniata</taxon>
        <taxon>Vertebrata</taxon>
        <taxon>Euteleostomi</taxon>
        <taxon>Archelosauria</taxon>
        <taxon>Archosauria</taxon>
        <taxon>Dinosauria</taxon>
        <taxon>Saurischia</taxon>
        <taxon>Theropoda</taxon>
        <taxon>Coelurosauria</taxon>
        <taxon>Aves</taxon>
        <taxon>Neognathae</taxon>
        <taxon>Galloanserae</taxon>
        <taxon>Galliformes</taxon>
        <taxon>Phasianidae</taxon>
        <taxon>Phasianinae</taxon>
        <taxon>Gallus</taxon>
    </lineage>
</organism>
<name>KCTD7_CHICK</name>